<organism>
    <name type="scientific">Archaeoglobus fulgidus (strain ATCC 49558 / DSM 4304 / JCM 9628 / NBRC 100126 / VC-16)</name>
    <dbReference type="NCBI Taxonomy" id="224325"/>
    <lineage>
        <taxon>Archaea</taxon>
        <taxon>Methanobacteriati</taxon>
        <taxon>Methanobacteriota</taxon>
        <taxon>Archaeoglobi</taxon>
        <taxon>Archaeoglobales</taxon>
        <taxon>Archaeoglobaceae</taxon>
        <taxon>Archaeoglobus</taxon>
    </lineage>
</organism>
<feature type="chain" id="PRO_0000127973" description="Uncharacterized protein AF_1221">
    <location>
        <begin position="1"/>
        <end position="48"/>
    </location>
</feature>
<feature type="transmembrane region" description="Helical" evidence="1">
    <location>
        <begin position="25"/>
        <end position="47"/>
    </location>
</feature>
<gene>
    <name type="ordered locus">AF_1221</name>
</gene>
<sequence length="48" mass="5307">MSAKMEILLFANLAHKSMFGMEPVTFASIGVTVGVQIVILLIWGLSWR</sequence>
<accession>O29047</accession>
<keyword id="KW-0472">Membrane</keyword>
<keyword id="KW-1185">Reference proteome</keyword>
<keyword id="KW-0812">Transmembrane</keyword>
<keyword id="KW-1133">Transmembrane helix</keyword>
<proteinExistence type="predicted"/>
<protein>
    <recommendedName>
        <fullName>Uncharacterized protein AF_1221</fullName>
    </recommendedName>
</protein>
<name>Y1221_ARCFU</name>
<evidence type="ECO:0000255" key="1"/>
<evidence type="ECO:0000305" key="2"/>
<reference key="1">
    <citation type="journal article" date="1997" name="Nature">
        <title>The complete genome sequence of the hyperthermophilic, sulphate-reducing archaeon Archaeoglobus fulgidus.</title>
        <authorList>
            <person name="Klenk H.-P."/>
            <person name="Clayton R.A."/>
            <person name="Tomb J.-F."/>
            <person name="White O."/>
            <person name="Nelson K.E."/>
            <person name="Ketchum K.A."/>
            <person name="Dodson R.J."/>
            <person name="Gwinn M.L."/>
            <person name="Hickey E.K."/>
            <person name="Peterson J.D."/>
            <person name="Richardson D.L."/>
            <person name="Kerlavage A.R."/>
            <person name="Graham D.E."/>
            <person name="Kyrpides N.C."/>
            <person name="Fleischmann R.D."/>
            <person name="Quackenbush J."/>
            <person name="Lee N.H."/>
            <person name="Sutton G.G."/>
            <person name="Gill S.R."/>
            <person name="Kirkness E.F."/>
            <person name="Dougherty B.A."/>
            <person name="McKenney K."/>
            <person name="Adams M.D."/>
            <person name="Loftus B.J."/>
            <person name="Peterson S.N."/>
            <person name="Reich C.I."/>
            <person name="McNeil L.K."/>
            <person name="Badger J.H."/>
            <person name="Glodek A."/>
            <person name="Zhou L."/>
            <person name="Overbeek R."/>
            <person name="Gocayne J.D."/>
            <person name="Weidman J.F."/>
            <person name="McDonald L.A."/>
            <person name="Utterback T.R."/>
            <person name="Cotton M.D."/>
            <person name="Spriggs T."/>
            <person name="Artiach P."/>
            <person name="Kaine B.P."/>
            <person name="Sykes S.M."/>
            <person name="Sadow P.W."/>
            <person name="D'Andrea K.P."/>
            <person name="Bowman C."/>
            <person name="Fujii C."/>
            <person name="Garland S.A."/>
            <person name="Mason T.M."/>
            <person name="Olsen G.J."/>
            <person name="Fraser C.M."/>
            <person name="Smith H.O."/>
            <person name="Woese C.R."/>
            <person name="Venter J.C."/>
        </authorList>
    </citation>
    <scope>NUCLEOTIDE SEQUENCE [LARGE SCALE GENOMIC DNA]</scope>
    <source>
        <strain>ATCC 49558 / DSM 4304 / JCM 9628 / NBRC 100126 / VC-16</strain>
    </source>
</reference>
<comment type="subcellular location">
    <subcellularLocation>
        <location evidence="2">Membrane</location>
        <topology evidence="2">Single-pass membrane protein</topology>
    </subcellularLocation>
</comment>
<dbReference type="EMBL" id="AE000782">
    <property type="protein sequence ID" value="AAB90036.1"/>
    <property type="molecule type" value="Genomic_DNA"/>
</dbReference>
<dbReference type="PIR" id="D69402">
    <property type="entry name" value="D69402"/>
</dbReference>
<dbReference type="SMR" id="O29047"/>
<dbReference type="STRING" id="224325.AF_1221"/>
<dbReference type="PaxDb" id="224325-AF_1221"/>
<dbReference type="DNASU" id="1484445"/>
<dbReference type="EnsemblBacteria" id="AAB90036">
    <property type="protein sequence ID" value="AAB90036"/>
    <property type="gene ID" value="AF_1221"/>
</dbReference>
<dbReference type="KEGG" id="afu:AF_1221"/>
<dbReference type="HOGENOM" id="CLU_3147771_0_0_2"/>
<dbReference type="Proteomes" id="UP000002199">
    <property type="component" value="Chromosome"/>
</dbReference>
<dbReference type="GO" id="GO:0016020">
    <property type="term" value="C:membrane"/>
    <property type="evidence" value="ECO:0007669"/>
    <property type="project" value="UniProtKB-SubCell"/>
</dbReference>